<keyword id="KW-0007">Acetylation</keyword>
<keyword id="KW-0119">Carbohydrate metabolism</keyword>
<keyword id="KW-0963">Cytoplasm</keyword>
<keyword id="KW-0903">Direct protein sequencing</keyword>
<keyword id="KW-0313">Glucose metabolism</keyword>
<keyword id="KW-0325">Glycoprotein</keyword>
<keyword id="KW-0413">Isomerase</keyword>
<keyword id="KW-0460">Magnesium</keyword>
<keyword id="KW-0479">Metal-binding</keyword>
<keyword id="KW-0597">Phosphoprotein</keyword>
<keyword id="KW-1185">Reference proteome</keyword>
<evidence type="ECO:0000250" key="1">
    <source>
        <dbReference type="UniProtKB" id="P00949"/>
    </source>
</evidence>
<evidence type="ECO:0000250" key="2">
    <source>
        <dbReference type="UniProtKB" id="P47244"/>
    </source>
</evidence>
<evidence type="ECO:0000256" key="3">
    <source>
        <dbReference type="SAM" id="MobiDB-lite"/>
    </source>
</evidence>
<evidence type="ECO:0000269" key="4">
    <source>
    </source>
</evidence>
<evidence type="ECO:0000269" key="5">
    <source>
    </source>
</evidence>
<evidence type="ECO:0000269" key="6">
    <source>
    </source>
</evidence>
<evidence type="ECO:0000269" key="7">
    <source>
    </source>
</evidence>
<evidence type="ECO:0000269" key="8">
    <source>
    </source>
</evidence>
<evidence type="ECO:0000269" key="9">
    <source>
    </source>
</evidence>
<evidence type="ECO:0000269" key="10">
    <source>
    </source>
</evidence>
<evidence type="ECO:0000269" key="11">
    <source>
    </source>
</evidence>
<evidence type="ECO:0000269" key="12">
    <source>
    </source>
</evidence>
<evidence type="ECO:0000269" key="13">
    <source>
    </source>
</evidence>
<evidence type="ECO:0000269" key="14">
    <source>
    </source>
</evidence>
<evidence type="ECO:0000303" key="15">
    <source>
    </source>
</evidence>
<evidence type="ECO:0000303" key="16">
    <source>
    </source>
</evidence>
<evidence type="ECO:0000303" key="17">
    <source>
    </source>
</evidence>
<evidence type="ECO:0000303" key="18">
    <source>
    </source>
</evidence>
<evidence type="ECO:0000305" key="19"/>
<evidence type="ECO:0000305" key="20">
    <source>
    </source>
</evidence>
<evidence type="ECO:0000305" key="21">
    <source>
    </source>
</evidence>
<evidence type="ECO:0000305" key="22">
    <source>
    </source>
</evidence>
<evidence type="ECO:0000312" key="23">
    <source>
        <dbReference type="SGD" id="S000004711"/>
    </source>
</evidence>
<evidence type="ECO:0007744" key="24">
    <source>
    </source>
</evidence>
<evidence type="ECO:0007744" key="25">
    <source>
    </source>
</evidence>
<evidence type="ECO:0007744" key="26">
    <source>
    </source>
</evidence>
<gene>
    <name evidence="18" type="primary">PGM2</name>
    <name evidence="15" type="synonym">GA-5</name>
    <name evidence="17" type="synonym">GAL5</name>
    <name evidence="23" type="ordered locus">YMR105C</name>
    <name type="ORF">YM9718.04C</name>
</gene>
<sequence length="569" mass="63089">MSFQIETVPTKPYEDQKPGTSGLRKKTKVFKDEPNYTENFIQSIMEAIPEGSKGATLVVGGDGRYYNDVILHKIAAIGAANGIKKLVIGQHGLLSTPAASHIMRTYEEKCTGGIILTASHNPGGPENDMGIKYNLSNGGPAPESVTNAIWEISKKLTSYKIIKDFPELDLGTIGKNKKYGPLLVDIIDITKDYVNFLKEIFDFDLIKKFIDNQRSTKNWKLLFDSMNGVTGPYGKAIFVDEFGLPADEVLQNWHPSPDFGGMHPDPNLTYASSLVKRVDREKIEFGAASDGDGDRNMIYGYGPSFVSPGDSVAIIAEYAAEIPYFAKQGIYGLARSFPTSGAIDRVAKAHGLNCYEVPTGWKFFCALFDAKKLSICGEESFGTGSNHVREKDGVWAIMAWLNILAIYNKHHPENEASIKTIQNEFWAKYGRTFFTRYDFEKVETEKANKIVDQLRAYVTKSGVVNSAFPADESLKVTDCGDFSYTDLDGSVSDHQGLYVKLSNGARFVLRLSGTGSSGATIRLYIEKYCDDKSQYQKTAEEYLKPIINSVIKFLNFKQVLGTEEPTVRT</sequence>
<organism>
    <name type="scientific">Saccharomyces cerevisiae (strain ATCC 204508 / S288c)</name>
    <name type="common">Baker's yeast</name>
    <dbReference type="NCBI Taxonomy" id="559292"/>
    <lineage>
        <taxon>Eukaryota</taxon>
        <taxon>Fungi</taxon>
        <taxon>Dikarya</taxon>
        <taxon>Ascomycota</taxon>
        <taxon>Saccharomycotina</taxon>
        <taxon>Saccharomycetes</taxon>
        <taxon>Saccharomycetales</taxon>
        <taxon>Saccharomycetaceae</taxon>
        <taxon>Saccharomyces</taxon>
    </lineage>
</organism>
<reference key="1">
    <citation type="journal article" date="1994" name="Eur. J. Biochem.">
        <title>A family of hexosephosphate mutases in Saccharomyces cerevisiae.</title>
        <authorList>
            <person name="Boles E."/>
            <person name="Liebetrau W."/>
            <person name="Hofmann M."/>
            <person name="Zimmermann F.K."/>
        </authorList>
    </citation>
    <scope>NUCLEOTIDE SEQUENCE [GENOMIC DNA]</scope>
</reference>
<reference key="2">
    <citation type="submission" date="1994-05" db="EMBL/GenBank/DDBJ databases">
        <authorList>
            <person name="Fu L."/>
            <person name="Bounelis P."/>
            <person name="Dey N."/>
            <person name="Browne B.L."/>
            <person name="Marchase R.B."/>
            <person name="Bedwell D.M."/>
        </authorList>
    </citation>
    <scope>NUCLEOTIDE SEQUENCE [GENOMIC DNA]</scope>
</reference>
<reference key="3">
    <citation type="journal article" date="1997" name="Nature">
        <title>The nucleotide sequence of Saccharomyces cerevisiae chromosome XIII.</title>
        <authorList>
            <person name="Bowman S."/>
            <person name="Churcher C.M."/>
            <person name="Badcock K."/>
            <person name="Brown D."/>
            <person name="Chillingworth T."/>
            <person name="Connor R."/>
            <person name="Dedman K."/>
            <person name="Devlin K."/>
            <person name="Gentles S."/>
            <person name="Hamlin N."/>
            <person name="Hunt S."/>
            <person name="Jagels K."/>
            <person name="Lye G."/>
            <person name="Moule S."/>
            <person name="Odell C."/>
            <person name="Pearson D."/>
            <person name="Rajandream M.A."/>
            <person name="Rice P."/>
            <person name="Skelton J."/>
            <person name="Walsh S.V."/>
            <person name="Whitehead S."/>
            <person name="Barrell B.G."/>
        </authorList>
    </citation>
    <scope>NUCLEOTIDE SEQUENCE [LARGE SCALE GENOMIC DNA]</scope>
    <source>
        <strain>ATCC 204508 / S288c</strain>
    </source>
</reference>
<reference key="4">
    <citation type="journal article" date="2014" name="G3 (Bethesda)">
        <title>The reference genome sequence of Saccharomyces cerevisiae: Then and now.</title>
        <authorList>
            <person name="Engel S.R."/>
            <person name="Dietrich F.S."/>
            <person name="Fisk D.G."/>
            <person name="Binkley G."/>
            <person name="Balakrishnan R."/>
            <person name="Costanzo M.C."/>
            <person name="Dwight S.S."/>
            <person name="Hitz B.C."/>
            <person name="Karra K."/>
            <person name="Nash R.S."/>
            <person name="Weng S."/>
            <person name="Wong E.D."/>
            <person name="Lloyd P."/>
            <person name="Skrzypek M.S."/>
            <person name="Miyasato S.R."/>
            <person name="Simison M."/>
            <person name="Cherry J.M."/>
        </authorList>
    </citation>
    <scope>GENOME REANNOTATION</scope>
    <source>
        <strain>ATCC 204508 / S288c</strain>
    </source>
</reference>
<reference key="5">
    <citation type="journal article" date="2007" name="Genome Res.">
        <title>Approaching a complete repository of sequence-verified protein-encoding clones for Saccharomyces cerevisiae.</title>
        <authorList>
            <person name="Hu Y."/>
            <person name="Rolfs A."/>
            <person name="Bhullar B."/>
            <person name="Murthy T.V.S."/>
            <person name="Zhu C."/>
            <person name="Berger M.F."/>
            <person name="Camargo A.A."/>
            <person name="Kelley F."/>
            <person name="McCarron S."/>
            <person name="Jepson D."/>
            <person name="Richardson A."/>
            <person name="Raphael J."/>
            <person name="Moreira D."/>
            <person name="Taycher E."/>
            <person name="Zuo D."/>
            <person name="Mohr S."/>
            <person name="Kane M.F."/>
            <person name="Williamson J."/>
            <person name="Simpson A.J.G."/>
            <person name="Bulyk M.L."/>
            <person name="Harlow E."/>
            <person name="Marsischky G."/>
            <person name="Kolodner R.D."/>
            <person name="LaBaer J."/>
        </authorList>
    </citation>
    <scope>NUCLEOTIDE SEQUENCE [GENOMIC DNA]</scope>
    <source>
        <strain>ATCC 204508 / S288c</strain>
    </source>
</reference>
<reference key="6">
    <citation type="journal article" date="1993" name="J. Biol. Chem.">
        <title>Phosphoglucomutase in Saccharomyces cerevisiae is a cytoplasmic glycoprotein and the acceptor for a Glc-phosphotransferase.</title>
        <authorList>
            <person name="Marchase R.B."/>
            <person name="Bounelis P."/>
            <person name="Brumley L.M."/>
            <person name="Dey N."/>
            <person name="Browne B."/>
            <person name="Auger D."/>
            <person name="Fritz T.A."/>
            <person name="Kulesza P."/>
            <person name="Bedwell D.M."/>
        </authorList>
    </citation>
    <scope>PROTEIN SEQUENCE OF 15-32 AND 265-275</scope>
    <scope>SUBCELLULAR LOCATION</scope>
    <scope>GLYCOSYLATION</scope>
</reference>
<reference key="7">
    <citation type="journal article" date="1961" name="Biochim. Biophys. Acta">
        <title>A mutation in Saccharomyces that affects phosphoglucomutase activity and galactose utilization.</title>
        <authorList>
            <person name="Douglas H.C."/>
        </authorList>
    </citation>
    <scope>DISRUPTION PHENOTYPE</scope>
</reference>
<reference key="8">
    <citation type="journal article" date="1964" name="Biochim. Biophys. Acta">
        <title>The effect of mutation of two forms of phosphoglucomutase in Saccharomyces.</title>
        <authorList>
            <person name="Tsoi A."/>
            <person name="Douglas H.C."/>
        </authorList>
    </citation>
    <scope>FUNCTION</scope>
    <scope>DISRUPTION PHENOTYPE</scope>
    <source>
        <strain>8050B</strain>
    </source>
</reference>
<reference key="9">
    <citation type="journal article" date="1967" name="Proc. Natl. Acad. Sci. U.S.A.">
        <title>Phosphoglucomutase. V. Multiple forms of phosphoglucomutase.</title>
        <authorList>
            <person name="Joshi J.G."/>
            <person name="Hooper J."/>
            <person name="Kuwaki T."/>
            <person name="Sakurada T."/>
            <person name="Swanson J.R."/>
            <person name="Handler P."/>
        </authorList>
    </citation>
    <scope>FUNCTION</scope>
</reference>
<reference key="10">
    <citation type="journal article" date="1969" name="J. Bacteriol.">
        <title>Genetic control of phosphoglucomutase variants in Saccharomyces cerevisiae.</title>
        <authorList>
            <person name="Bevan P."/>
            <person name="Douglas H.C."/>
        </authorList>
    </citation>
    <scope>FUNCTION</scope>
</reference>
<reference key="11">
    <citation type="journal article" date="1970" name="J. Biochem.">
        <title>Crystallization and reaction mechanism of yeast phosphoglucomutase.</title>
        <authorList>
            <person name="Hirose M."/>
            <person name="Sugimoto E."/>
            <person name="Sasaki R."/>
            <person name="Chiaa H."/>
        </authorList>
    </citation>
    <scope>CATALYTIC ACTIVITY</scope>
    <scope>FUNCTION</scope>
</reference>
<reference key="12">
    <citation type="journal article" date="1972" name="Biochim. Biophys. Acta">
        <title>Studies on crystalline yeast phosphoglucomutase: the presence of intrinsic zinc.</title>
        <authorList>
            <person name="Hirose M."/>
            <person name="Sugimoto E."/>
            <person name="Chiba H."/>
        </authorList>
    </citation>
    <scope>COFACTOR</scope>
</reference>
<reference key="13">
    <citation type="journal article" date="1975" name="Eur. J. Biochem.">
        <title>Purification and properties of phosphoglucomutase from Fleischmann's yeast.</title>
        <authorList>
            <person name="Daugherty J.P."/>
            <person name="Kraemer W.F."/>
            <person name="Joshi J.G."/>
        </authorList>
    </citation>
    <scope>CATALYTIC ACTIVITY</scope>
    <scope>FUNCTION</scope>
    <scope>COFACTOR</scope>
    <scope>BIOPHYSICOCHEMICAL PROPERTIES</scope>
    <scope>SUBUNIT</scope>
</reference>
<reference key="14">
    <citation type="journal article" date="1990" name="Mol. Cell. Biol.">
        <title>Transcription of a yeast phosphoglucomutase isozyme gene is galactose inducible and glucose repressible.</title>
        <authorList>
            <person name="Oh D."/>
            <person name="Hopper J.E."/>
        </authorList>
    </citation>
    <scope>INDUCTION</scope>
</reference>
<reference key="15">
    <citation type="journal article" date="1994" name="J. Biol. Chem.">
        <title>The glycosylation of phosphoglucomutase is modulated by carbon source and heat shock in Saccharomyces cerevisiae.</title>
        <authorList>
            <person name="Dey N.B."/>
            <person name="Bounelis P."/>
            <person name="Fritz T.A."/>
            <person name="Bedwell D.M."/>
            <person name="Marchase R.B."/>
        </authorList>
    </citation>
    <scope>GLYCOSYLATION</scope>
</reference>
<reference key="16">
    <citation type="journal article" date="2003" name="Nature">
        <title>Global analysis of protein expression in yeast.</title>
        <authorList>
            <person name="Ghaemmaghami S."/>
            <person name="Huh W.-K."/>
            <person name="Bower K."/>
            <person name="Howson R.W."/>
            <person name="Belle A."/>
            <person name="Dephoure N."/>
            <person name="O'Shea E.K."/>
            <person name="Weissman J.S."/>
        </authorList>
    </citation>
    <scope>LEVEL OF PROTEIN EXPRESSION [LARGE SCALE ANALYSIS]</scope>
</reference>
<reference key="17">
    <citation type="journal article" date="2007" name="J. Proteome Res.">
        <title>Large-scale phosphorylation analysis of alpha-factor-arrested Saccharomyces cerevisiae.</title>
        <authorList>
            <person name="Li X."/>
            <person name="Gerber S.A."/>
            <person name="Rudner A.D."/>
            <person name="Beausoleil S.A."/>
            <person name="Haas W."/>
            <person name="Villen J."/>
            <person name="Elias J.E."/>
            <person name="Gygi S.P."/>
        </authorList>
    </citation>
    <scope>IDENTIFICATION BY MASS SPECTROMETRY [LARGE SCALE ANALYSIS]</scope>
    <source>
        <strain>ADR376</strain>
    </source>
</reference>
<reference key="18">
    <citation type="journal article" date="2008" name="Mol. Cell. Proteomics">
        <title>A multidimensional chromatography technology for in-depth phosphoproteome analysis.</title>
        <authorList>
            <person name="Albuquerque C.P."/>
            <person name="Smolka M.B."/>
            <person name="Payne S.H."/>
            <person name="Bafna V."/>
            <person name="Eng J."/>
            <person name="Zhou H."/>
        </authorList>
    </citation>
    <scope>PHOSPHORYLATION [LARGE SCALE ANALYSIS] AT SER-119</scope>
    <scope>IDENTIFICATION BY MASS SPECTROMETRY [LARGE SCALE ANALYSIS]</scope>
</reference>
<reference key="19">
    <citation type="journal article" date="2009" name="Science">
        <title>Global analysis of Cdk1 substrate phosphorylation sites provides insights into evolution.</title>
        <authorList>
            <person name="Holt L.J."/>
            <person name="Tuch B.B."/>
            <person name="Villen J."/>
            <person name="Johnson A.D."/>
            <person name="Gygi S.P."/>
            <person name="Morgan D.O."/>
        </authorList>
    </citation>
    <scope>PHOSPHORYLATION [LARGE SCALE ANALYSIS] AT THR-111; THR-117 AND SER-119</scope>
    <scope>IDENTIFICATION BY MASS SPECTROMETRY [LARGE SCALE ANALYSIS]</scope>
</reference>
<reference key="20">
    <citation type="journal article" date="2012" name="FEBS Lett.">
        <title>The PGM3 gene encodes the major phosphoribomutase in the yeast Saccharomyces cerevisiae.</title>
        <authorList>
            <person name="Walther T."/>
            <person name="Baylac A."/>
            <person name="Alkim C."/>
            <person name="Vax A."/>
            <person name="Cordier H."/>
            <person name="Francois J.M."/>
        </authorList>
    </citation>
    <scope>FUNCTION</scope>
    <scope>CATALYTIC ACTIVITY</scope>
    <scope>BIOPHYSICOCHEMICAL PROPERTIES</scope>
</reference>
<reference key="21">
    <citation type="journal article" date="2012" name="Proc. Natl. Acad. Sci. U.S.A.">
        <title>N-terminal acetylome analyses and functional insights of the N-terminal acetyltransferase NatB.</title>
        <authorList>
            <person name="Van Damme P."/>
            <person name="Lasa M."/>
            <person name="Polevoda B."/>
            <person name="Gazquez C."/>
            <person name="Elosegui-Artola A."/>
            <person name="Kim D.S."/>
            <person name="De Juan-Pardo E."/>
            <person name="Demeyer K."/>
            <person name="Hole K."/>
            <person name="Larrea E."/>
            <person name="Timmerman E."/>
            <person name="Prieto J."/>
            <person name="Arnesen T."/>
            <person name="Sherman F."/>
            <person name="Gevaert K."/>
            <person name="Aldabe R."/>
        </authorList>
    </citation>
    <scope>ACETYLATION [LARGE SCALE ANALYSIS] AT SER-2</scope>
    <scope>CLEAVAGE OF INITIATOR METHIONINE [LARGE SCALE ANALYSIS]</scope>
    <scope>IDENTIFICATION BY MASS SPECTROMETRY [LARGE SCALE ANALYSIS]</scope>
</reference>
<comment type="function">
    <text evidence="4 5 8 10 11 12 20 21 22">Major phosphoglucomutase isozyme that catalyzes the reversible isomerization of alpha-D-glucose 1-phosphate to alpha-D-glucose 6-phosphate (PubMed:1100398, PubMed:23103740, PubMed:4992300, PubMed:5784209). The mechanism proceeds via the intermediate compound alpha-D-glucose 1,6-bisphosphate (Probable). Constitutes about 80-90% of the phosphoglucomutase activity in the cell (PubMed:14264884, PubMed:5231755). Key enzyme in hexose metabolism. The forward reaction is an essential step in the energy metabolism of galactose since the product of the galactose pathway enzymes in yeast is glucose 1-phosphate. The reverse reaction is an essential step for biosynthesis when carbon sources other than galactose are the energy source because glucose 1-phosphate is the starting point for the synthesis of UDP-glucose, which acts as a precursor for the synthesis of oligosaccharides and trehalose (PubMed:14264884).</text>
</comment>
<comment type="catalytic activity">
    <reaction evidence="4 8 10">
        <text>alpha-D-glucose 1-phosphate = alpha-D-glucose 6-phosphate</text>
        <dbReference type="Rhea" id="RHEA:23536"/>
        <dbReference type="ChEBI" id="CHEBI:58225"/>
        <dbReference type="ChEBI" id="CHEBI:58601"/>
        <dbReference type="EC" id="5.4.2.2"/>
    </reaction>
</comment>
<comment type="catalytic activity">
    <reaction evidence="20 21 22">
        <text>O-phospho-L-seryl-[protein] + alpha-D-glucose 1-phosphate = alpha-D-glucose 1,6-bisphosphate + L-seryl-[protein]</text>
        <dbReference type="Rhea" id="RHEA:68748"/>
        <dbReference type="Rhea" id="RHEA-COMP:9863"/>
        <dbReference type="Rhea" id="RHEA-COMP:11604"/>
        <dbReference type="ChEBI" id="CHEBI:29999"/>
        <dbReference type="ChEBI" id="CHEBI:58392"/>
        <dbReference type="ChEBI" id="CHEBI:58601"/>
        <dbReference type="ChEBI" id="CHEBI:83421"/>
    </reaction>
</comment>
<comment type="catalytic activity">
    <reaction evidence="20 21 22">
        <text>alpha-D-glucose 1,6-bisphosphate + L-seryl-[protein] = O-phospho-L-seryl-[protein] + alpha-D-glucose 6-phosphate</text>
        <dbReference type="Rhea" id="RHEA:68752"/>
        <dbReference type="Rhea" id="RHEA-COMP:9863"/>
        <dbReference type="Rhea" id="RHEA-COMP:11604"/>
        <dbReference type="ChEBI" id="CHEBI:29999"/>
        <dbReference type="ChEBI" id="CHEBI:58225"/>
        <dbReference type="ChEBI" id="CHEBI:58392"/>
        <dbReference type="ChEBI" id="CHEBI:83421"/>
    </reaction>
</comment>
<comment type="cofactor">
    <cofactor evidence="4 9">
        <name>Mg(2+)</name>
        <dbReference type="ChEBI" id="CHEBI:18420"/>
    </cofactor>
    <cofactor evidence="4 9">
        <name>Zn(2+)</name>
        <dbReference type="ChEBI" id="CHEBI:29105"/>
    </cofactor>
    <text evidence="4 9">Binds 1 magnesium ion per subunit. Can also use Zn(2+) as cofactor.</text>
</comment>
<comment type="biophysicochemical properties">
    <kinetics>
        <KM evidence="4">2.24 uM for alpha-D-glucose 1,6-diphosphate</KM>
        <KM evidence="4">23.4 uM for alpha-D-glucose 1-phosphate</KM>
        <KM evidence="8">26 uM for alpha-D-glucose 1-phosphate</KM>
        <KM evidence="8">530 uM for D-ribose 1-phosphate</KM>
        <Vmax evidence="8">33.7 umol/min/mg enzyme for alpha-D-glucose 1-phosphate</Vmax>
        <Vmax evidence="8">0.32 umol/min/mg enzyme for D-ribose 1-phosphate</Vmax>
    </kinetics>
</comment>
<comment type="subunit">
    <text evidence="4">Monomer.</text>
</comment>
<comment type="subcellular location">
    <subcellularLocation>
        <location evidence="14">Cytoplasm</location>
    </subcellularLocation>
</comment>
<comment type="induction">
    <text evidence="7">Induced in response to galactose and severely repressed in response to glucose.</text>
</comment>
<comment type="PTM">
    <text evidence="2 13 14">O-glycosylated with mannose residues (By similarity). Substrate of UDP-glucose--glycoprotein glucose phosphotransferase, linking glucose in a phosphodiester linkage to O-linked mannose (PubMed:7929458, PubMed:8385141).</text>
</comment>
<comment type="disruption phenotype">
    <text evidence="5">Blocks galactose utilization, but does not impair growth on glucose.</text>
</comment>
<comment type="miscellaneous">
    <text evidence="6">Present with 3790 molecules/cell in log phase SD medium.</text>
</comment>
<comment type="similarity">
    <text evidence="19">Belongs to the phosphohexose mutase family.</text>
</comment>
<accession>P37012</accession>
<accession>D6VZS7</accession>
<dbReference type="EC" id="5.4.2.2" evidence="4 8 10"/>
<dbReference type="EMBL" id="X74823">
    <property type="protein sequence ID" value="CAA52820.1"/>
    <property type="molecule type" value="Genomic_DNA"/>
</dbReference>
<dbReference type="EMBL" id="U09499">
    <property type="protein sequence ID" value="AAA91282.1"/>
    <property type="molecule type" value="Genomic_DNA"/>
</dbReference>
<dbReference type="EMBL" id="Z49702">
    <property type="protein sequence ID" value="CAA89741.1"/>
    <property type="molecule type" value="Genomic_DNA"/>
</dbReference>
<dbReference type="EMBL" id="AY723853">
    <property type="protein sequence ID" value="AAU09770.1"/>
    <property type="molecule type" value="Genomic_DNA"/>
</dbReference>
<dbReference type="EMBL" id="BK006946">
    <property type="protein sequence ID" value="DAA10001.1"/>
    <property type="molecule type" value="Genomic_DNA"/>
</dbReference>
<dbReference type="PIR" id="S41200">
    <property type="entry name" value="S41200"/>
</dbReference>
<dbReference type="RefSeq" id="NP_013823.1">
    <property type="nucleotide sequence ID" value="NM_001182605.1"/>
</dbReference>
<dbReference type="SMR" id="P37012"/>
<dbReference type="BioGRID" id="35280">
    <property type="interactions" value="128"/>
</dbReference>
<dbReference type="DIP" id="DIP-6499N"/>
<dbReference type="FunCoup" id="P37012">
    <property type="interactions" value="803"/>
</dbReference>
<dbReference type="IntAct" id="P37012">
    <property type="interactions" value="28"/>
</dbReference>
<dbReference type="MINT" id="P37012"/>
<dbReference type="STRING" id="4932.YMR105C"/>
<dbReference type="iPTMnet" id="P37012"/>
<dbReference type="PaxDb" id="4932-YMR105C"/>
<dbReference type="PeptideAtlas" id="P37012"/>
<dbReference type="EnsemblFungi" id="YMR105C_mRNA">
    <property type="protein sequence ID" value="YMR105C"/>
    <property type="gene ID" value="YMR105C"/>
</dbReference>
<dbReference type="GeneID" id="855131"/>
<dbReference type="KEGG" id="sce:YMR105C"/>
<dbReference type="AGR" id="SGD:S000004711"/>
<dbReference type="SGD" id="S000004711">
    <property type="gene designation" value="PGM2"/>
</dbReference>
<dbReference type="VEuPathDB" id="FungiDB:YMR105C"/>
<dbReference type="eggNOG" id="KOG0625">
    <property type="taxonomic scope" value="Eukaryota"/>
</dbReference>
<dbReference type="GeneTree" id="ENSGT00940000173602"/>
<dbReference type="HOGENOM" id="CLU_009330_0_1_1"/>
<dbReference type="InParanoid" id="P37012"/>
<dbReference type="OMA" id="WIQDRAN"/>
<dbReference type="OrthoDB" id="2291at2759"/>
<dbReference type="BioCyc" id="MetaCyc:YMR105C-MONOMER"/>
<dbReference type="BioCyc" id="YEAST:YMR105C-MONOMER"/>
<dbReference type="Reactome" id="R-SCE-3322077">
    <property type="pathway name" value="Glycogen synthesis"/>
</dbReference>
<dbReference type="Reactome" id="R-SCE-6798695">
    <property type="pathway name" value="Neutrophil degranulation"/>
</dbReference>
<dbReference type="Reactome" id="R-SCE-70221">
    <property type="pathway name" value="Glycogen breakdown (glycogenolysis)"/>
</dbReference>
<dbReference type="Reactome" id="R-SCE-70370">
    <property type="pathway name" value="Galactose catabolism"/>
</dbReference>
<dbReference type="SABIO-RK" id="P37012"/>
<dbReference type="BioGRID-ORCS" id="855131">
    <property type="hits" value="1 hit in 10 CRISPR screens"/>
</dbReference>
<dbReference type="PRO" id="PR:P37012"/>
<dbReference type="Proteomes" id="UP000002311">
    <property type="component" value="Chromosome XIII"/>
</dbReference>
<dbReference type="RNAct" id="P37012">
    <property type="molecule type" value="protein"/>
</dbReference>
<dbReference type="GO" id="GO:0005737">
    <property type="term" value="C:cytoplasm"/>
    <property type="evidence" value="ECO:0000314"/>
    <property type="project" value="SGD"/>
</dbReference>
<dbReference type="GO" id="GO:0005829">
    <property type="term" value="C:cytosol"/>
    <property type="evidence" value="ECO:0000318"/>
    <property type="project" value="GO_Central"/>
</dbReference>
<dbReference type="GO" id="GO:0000287">
    <property type="term" value="F:magnesium ion binding"/>
    <property type="evidence" value="ECO:0007669"/>
    <property type="project" value="InterPro"/>
</dbReference>
<dbReference type="GO" id="GO:0004614">
    <property type="term" value="F:phosphoglucomutase activity"/>
    <property type="evidence" value="ECO:0000315"/>
    <property type="project" value="SGD"/>
</dbReference>
<dbReference type="GO" id="GO:0005975">
    <property type="term" value="P:carbohydrate metabolic process"/>
    <property type="evidence" value="ECO:0000318"/>
    <property type="project" value="GO_Central"/>
</dbReference>
<dbReference type="GO" id="GO:0019388">
    <property type="term" value="P:galactose catabolic process"/>
    <property type="evidence" value="ECO:0000315"/>
    <property type="project" value="SGD"/>
</dbReference>
<dbReference type="GO" id="GO:0019255">
    <property type="term" value="P:glucose 1-phosphate metabolic process"/>
    <property type="evidence" value="ECO:0000315"/>
    <property type="project" value="SGD"/>
</dbReference>
<dbReference type="GO" id="GO:0051156">
    <property type="term" value="P:glucose 6-phosphate metabolic process"/>
    <property type="evidence" value="ECO:0000316"/>
    <property type="project" value="SGD"/>
</dbReference>
<dbReference type="GO" id="GO:0006006">
    <property type="term" value="P:glucose metabolic process"/>
    <property type="evidence" value="ECO:0007669"/>
    <property type="project" value="UniProtKB-KW"/>
</dbReference>
<dbReference type="GO" id="GO:0005978">
    <property type="term" value="P:glycogen biosynthetic process"/>
    <property type="evidence" value="ECO:0000316"/>
    <property type="project" value="SGD"/>
</dbReference>
<dbReference type="GO" id="GO:0006874">
    <property type="term" value="P:intracellular calcium ion homeostasis"/>
    <property type="evidence" value="ECO:0000315"/>
    <property type="project" value="SGD"/>
</dbReference>
<dbReference type="GO" id="GO:0030003">
    <property type="term" value="P:intracellular monoatomic cation homeostasis"/>
    <property type="evidence" value="ECO:0000315"/>
    <property type="project" value="SGD"/>
</dbReference>
<dbReference type="GO" id="GO:0005992">
    <property type="term" value="P:trehalose biosynthetic process"/>
    <property type="evidence" value="ECO:0000316"/>
    <property type="project" value="SGD"/>
</dbReference>
<dbReference type="GO" id="GO:0006011">
    <property type="term" value="P:UDP-alpha-D-glucose metabolic process"/>
    <property type="evidence" value="ECO:0000316"/>
    <property type="project" value="SGD"/>
</dbReference>
<dbReference type="CDD" id="cd03085">
    <property type="entry name" value="PGM1"/>
    <property type="match status" value="1"/>
</dbReference>
<dbReference type="FunFam" id="3.30.310.50:FF:000002">
    <property type="entry name" value="Phosphoglucomutase 5"/>
    <property type="match status" value="1"/>
</dbReference>
<dbReference type="FunFam" id="3.40.120.10:FF:000004">
    <property type="entry name" value="Phosphoglucomutase 5"/>
    <property type="match status" value="1"/>
</dbReference>
<dbReference type="FunFam" id="3.40.120.10:FF:000005">
    <property type="entry name" value="Phosphoglucomutase 5"/>
    <property type="match status" value="1"/>
</dbReference>
<dbReference type="FunFam" id="3.40.120.10:FF:000006">
    <property type="entry name" value="Phosphoglucomutase PgmA"/>
    <property type="match status" value="1"/>
</dbReference>
<dbReference type="Gene3D" id="3.40.120.10">
    <property type="entry name" value="Alpha-D-Glucose-1,6-Bisphosphate, subunit A, domain 3"/>
    <property type="match status" value="3"/>
</dbReference>
<dbReference type="Gene3D" id="3.30.310.50">
    <property type="entry name" value="Alpha-D-phosphohexomutase, C-terminal domain"/>
    <property type="match status" value="1"/>
</dbReference>
<dbReference type="InterPro" id="IPR005844">
    <property type="entry name" value="A-D-PHexomutase_a/b/a-I"/>
</dbReference>
<dbReference type="InterPro" id="IPR016055">
    <property type="entry name" value="A-D-PHexomutase_a/b/a-I/II/III"/>
</dbReference>
<dbReference type="InterPro" id="IPR005845">
    <property type="entry name" value="A-D-PHexomutase_a/b/a-II"/>
</dbReference>
<dbReference type="InterPro" id="IPR005846">
    <property type="entry name" value="A-D-PHexomutase_a/b/a-III"/>
</dbReference>
<dbReference type="InterPro" id="IPR036900">
    <property type="entry name" value="A-D-PHexomutase_C_sf"/>
</dbReference>
<dbReference type="InterPro" id="IPR016066">
    <property type="entry name" value="A-D-PHexomutase_CS"/>
</dbReference>
<dbReference type="InterPro" id="IPR005841">
    <property type="entry name" value="Alpha-D-phosphohexomutase_SF"/>
</dbReference>
<dbReference type="InterPro" id="IPR045244">
    <property type="entry name" value="PGM"/>
</dbReference>
<dbReference type="NCBIfam" id="NF005737">
    <property type="entry name" value="PRK07564.1-1"/>
    <property type="match status" value="1"/>
</dbReference>
<dbReference type="PANTHER" id="PTHR22573:SF2">
    <property type="entry name" value="PHOSPHOGLUCOMUTASE"/>
    <property type="match status" value="1"/>
</dbReference>
<dbReference type="PANTHER" id="PTHR22573">
    <property type="entry name" value="PHOSPHOHEXOMUTASE FAMILY MEMBER"/>
    <property type="match status" value="1"/>
</dbReference>
<dbReference type="Pfam" id="PF24947">
    <property type="entry name" value="PGM1_C_vert_fung"/>
    <property type="match status" value="1"/>
</dbReference>
<dbReference type="Pfam" id="PF02878">
    <property type="entry name" value="PGM_PMM_I"/>
    <property type="match status" value="1"/>
</dbReference>
<dbReference type="Pfam" id="PF02879">
    <property type="entry name" value="PGM_PMM_II"/>
    <property type="match status" value="1"/>
</dbReference>
<dbReference type="Pfam" id="PF02880">
    <property type="entry name" value="PGM_PMM_III"/>
    <property type="match status" value="1"/>
</dbReference>
<dbReference type="PRINTS" id="PR00509">
    <property type="entry name" value="PGMPMM"/>
</dbReference>
<dbReference type="SUPFAM" id="SSF55957">
    <property type="entry name" value="Phosphoglucomutase, C-terminal domain"/>
    <property type="match status" value="1"/>
</dbReference>
<dbReference type="SUPFAM" id="SSF53738">
    <property type="entry name" value="Phosphoglucomutase, first 3 domains"/>
    <property type="match status" value="3"/>
</dbReference>
<dbReference type="PROSITE" id="PS00710">
    <property type="entry name" value="PGM_PMM"/>
    <property type="match status" value="1"/>
</dbReference>
<proteinExistence type="evidence at protein level"/>
<protein>
    <recommendedName>
        <fullName evidence="18">Phosphoglucomutase 2</fullName>
        <shortName evidence="18">PGM 2</shortName>
        <ecNumber evidence="4 8 10">5.4.2.2</ecNumber>
    </recommendedName>
    <alternativeName>
        <fullName evidence="16">D-glucose-1,6-diphosphate:D-glucose-1-phosphate phosphotransferase</fullName>
    </alternativeName>
    <alternativeName>
        <fullName>Glucose phosphomutase 2</fullName>
    </alternativeName>
</protein>
<name>PGM2_YEAST</name>
<feature type="initiator methionine" description="Removed" evidence="26">
    <location>
        <position position="1"/>
    </location>
</feature>
<feature type="chain" id="PRO_0000147797" description="Phosphoglucomutase 2">
    <location>
        <begin position="2"/>
        <end position="569"/>
    </location>
</feature>
<feature type="region of interest" description="Disordered" evidence="3">
    <location>
        <begin position="1"/>
        <end position="23"/>
    </location>
</feature>
<feature type="active site" description="Phosphoserine intermediate" evidence="1">
    <location>
        <position position="119"/>
    </location>
</feature>
<feature type="binding site" evidence="1">
    <location>
        <position position="24"/>
    </location>
    <ligand>
        <name>alpha-D-glucose 1,6-bisphosphate</name>
        <dbReference type="ChEBI" id="CHEBI:58392"/>
    </ligand>
</feature>
<feature type="binding site" evidence="1">
    <location>
        <position position="119"/>
    </location>
    <ligand>
        <name>alpha-D-glucose 1,6-bisphosphate</name>
        <dbReference type="ChEBI" id="CHEBI:58392"/>
    </ligand>
</feature>
<feature type="binding site" description="via phosphate group" evidence="1">
    <location>
        <position position="119"/>
    </location>
    <ligand>
        <name>Mg(2+)</name>
        <dbReference type="ChEBI" id="CHEBI:18420"/>
    </ligand>
</feature>
<feature type="binding site" evidence="1">
    <location>
        <position position="290"/>
    </location>
    <ligand>
        <name>Mg(2+)</name>
        <dbReference type="ChEBI" id="CHEBI:18420"/>
    </ligand>
</feature>
<feature type="binding site" evidence="1">
    <location>
        <position position="292"/>
    </location>
    <ligand>
        <name>Mg(2+)</name>
        <dbReference type="ChEBI" id="CHEBI:18420"/>
    </ligand>
</feature>
<feature type="binding site" evidence="1">
    <location>
        <position position="294"/>
    </location>
    <ligand>
        <name>alpha-D-glucose 1,6-bisphosphate</name>
        <dbReference type="ChEBI" id="CHEBI:58392"/>
    </ligand>
</feature>
<feature type="binding site" evidence="1">
    <location>
        <position position="294"/>
    </location>
    <ligand>
        <name>Mg(2+)</name>
        <dbReference type="ChEBI" id="CHEBI:18420"/>
    </ligand>
</feature>
<feature type="binding site" evidence="1">
    <location>
        <position position="295"/>
    </location>
    <ligand>
        <name>alpha-D-glucose 1,6-bisphosphate</name>
        <dbReference type="ChEBI" id="CHEBI:58392"/>
    </ligand>
</feature>
<feature type="binding site" evidence="1">
    <location>
        <position position="359"/>
    </location>
    <ligand>
        <name>alpha-D-glucose 1,6-bisphosphate</name>
        <dbReference type="ChEBI" id="CHEBI:58392"/>
    </ligand>
</feature>
<feature type="binding site" evidence="1">
    <location>
        <position position="378"/>
    </location>
    <ligand>
        <name>alpha-D-glucose 1,6-bisphosphate</name>
        <dbReference type="ChEBI" id="CHEBI:58392"/>
    </ligand>
</feature>
<feature type="binding site" evidence="1">
    <location>
        <position position="380"/>
    </location>
    <ligand>
        <name>alpha-D-glucose 1,6-bisphosphate</name>
        <dbReference type="ChEBI" id="CHEBI:58392"/>
    </ligand>
</feature>
<feature type="binding site" evidence="1">
    <location>
        <position position="391"/>
    </location>
    <ligand>
        <name>alpha-D-glucose 1,6-bisphosphate</name>
        <dbReference type="ChEBI" id="CHEBI:58392"/>
    </ligand>
</feature>
<feature type="modified residue" description="N-acetylserine" evidence="26">
    <location>
        <position position="2"/>
    </location>
</feature>
<feature type="modified residue" description="Phosphothreonine" evidence="25">
    <location>
        <position position="111"/>
    </location>
</feature>
<feature type="modified residue" description="Phosphothreonine" evidence="25">
    <location>
        <position position="117"/>
    </location>
</feature>
<feature type="modified residue" description="Phosphoserine" evidence="24 25">
    <location>
        <position position="119"/>
    </location>
</feature>
<feature type="sequence conflict" description="In Ref. 6; AA sequence." evidence="19" ref="6">
    <original>T</original>
    <variation>G</variation>
    <location>
        <position position="27"/>
    </location>
</feature>
<feature type="sequence conflict" description="In Ref. 6; AA sequence." evidence="19" ref="6">
    <original>D</original>
    <variation>G</variation>
    <location>
        <position position="32"/>
    </location>
</feature>
<feature type="sequence conflict" description="In Ref. 6; AA sequence." evidence="19" ref="6">
    <original>S</original>
    <variation>A</variation>
    <location>
        <position position="272"/>
    </location>
</feature>